<comment type="subcellular location">
    <subcellularLocation>
        <location evidence="1">Mitochondrion</location>
    </subcellularLocation>
</comment>
<evidence type="ECO:0000305" key="1"/>
<sequence>MKHASFCLSSRILLLAPCRYLGTLLLLLPYPCSTLRQFLFLLRSLFIRDVEWIPAGLSHHIPYFPLASPPLTVETLLIARLLLSIKQLSLPPAKTASLSASLDAKTKGRSLLSSCSYCYMPT</sequence>
<protein>
    <recommendedName>
        <fullName>Uncharacterized mitochondrial protein AtMg00680</fullName>
    </recommendedName>
    <alternativeName>
        <fullName>ORF122c</fullName>
    </alternativeName>
</protein>
<gene>
    <name type="ordered locus">AtMg00680</name>
</gene>
<dbReference type="EMBL" id="Y08501">
    <property type="protein sequence ID" value="CAA69843.1"/>
    <property type="molecule type" value="Genomic_DNA"/>
</dbReference>
<dbReference type="EMBL" id="BK010421">
    <property type="status" value="NOT_ANNOTATED_CDS"/>
    <property type="molecule type" value="Genomic_DNA"/>
</dbReference>
<dbReference type="RefSeq" id="NP_085528.1">
    <property type="nucleotide sequence ID" value="NC_001284.2"/>
</dbReference>
<dbReference type="STRING" id="3702.P92510"/>
<dbReference type="PaxDb" id="3702-ATMG00680.1"/>
<dbReference type="EnsemblPlants" id="ATMG00680.1">
    <property type="protein sequence ID" value="ATMG00680.1"/>
    <property type="gene ID" value="ATMG00680"/>
</dbReference>
<dbReference type="Gramene" id="ATMG00680.1">
    <property type="protein sequence ID" value="ATMG00680.1"/>
    <property type="gene ID" value="ATMG00680"/>
</dbReference>
<dbReference type="Araport" id="ATMG00680"/>
<dbReference type="TAIR" id="ATMG00680">
    <property type="gene designation" value="ORF122C"/>
</dbReference>
<dbReference type="HOGENOM" id="CLU_2029899_0_0_1"/>
<dbReference type="InParanoid" id="P92510"/>
<dbReference type="PRO" id="PR:P92510"/>
<dbReference type="Proteomes" id="UP000006548">
    <property type="component" value="Mitochondrion MT"/>
</dbReference>
<dbReference type="GO" id="GO:0005739">
    <property type="term" value="C:mitochondrion"/>
    <property type="evidence" value="ECO:0007669"/>
    <property type="project" value="UniProtKB-SubCell"/>
</dbReference>
<reference key="1">
    <citation type="journal article" date="1997" name="Nat. Genet.">
        <title>The mitochondrial genome of Arabidopsis thaliana contains 57 genes in 366,924 nucleotides.</title>
        <authorList>
            <person name="Unseld M."/>
            <person name="Marienfeld J.R."/>
            <person name="Brandt P."/>
            <person name="Brennicke A."/>
        </authorList>
    </citation>
    <scope>NUCLEOTIDE SEQUENCE [LARGE SCALE GENOMIC DNA]</scope>
    <source>
        <strain>cv. C24</strain>
    </source>
</reference>
<reference key="2">
    <citation type="journal article" date="2018" name="Plant Cell">
        <title>Correction of persistent errors in Arabidopsis reference mitochondrial genomes.</title>
        <authorList>
            <person name="Sloan D.B."/>
            <person name="Wu Z."/>
            <person name="Sharbrough J."/>
        </authorList>
    </citation>
    <scope>NUCLEOTIDE SEQUENCE [LARGE SCALE GENOMIC DNA]</scope>
    <source>
        <strain>cv. Columbia</strain>
    </source>
</reference>
<proteinExistence type="predicted"/>
<name>M680_ARATH</name>
<organism>
    <name type="scientific">Arabidopsis thaliana</name>
    <name type="common">Mouse-ear cress</name>
    <dbReference type="NCBI Taxonomy" id="3702"/>
    <lineage>
        <taxon>Eukaryota</taxon>
        <taxon>Viridiplantae</taxon>
        <taxon>Streptophyta</taxon>
        <taxon>Embryophyta</taxon>
        <taxon>Tracheophyta</taxon>
        <taxon>Spermatophyta</taxon>
        <taxon>Magnoliopsida</taxon>
        <taxon>eudicotyledons</taxon>
        <taxon>Gunneridae</taxon>
        <taxon>Pentapetalae</taxon>
        <taxon>rosids</taxon>
        <taxon>malvids</taxon>
        <taxon>Brassicales</taxon>
        <taxon>Brassicaceae</taxon>
        <taxon>Camelineae</taxon>
        <taxon>Arabidopsis</taxon>
    </lineage>
</organism>
<accession>P92510</accession>
<accession>Q1ZY02</accession>
<feature type="chain" id="PRO_0000196784" description="Uncharacterized mitochondrial protein AtMg00680">
    <location>
        <begin position="1"/>
        <end position="122"/>
    </location>
</feature>
<keyword id="KW-0496">Mitochondrion</keyword>
<keyword id="KW-1185">Reference proteome</keyword>
<geneLocation type="mitochondrion"/>